<keyword id="KW-1185">Reference proteome</keyword>
<keyword id="KW-0687">Ribonucleoprotein</keyword>
<keyword id="KW-0689">Ribosomal protein</keyword>
<gene>
    <name evidence="1" type="primary">rpsU</name>
    <name type="ordered locus">Mlg_2519</name>
</gene>
<protein>
    <recommendedName>
        <fullName evidence="1">Small ribosomal subunit protein bS21</fullName>
    </recommendedName>
    <alternativeName>
        <fullName evidence="3">30S ribosomal protein S21</fullName>
    </alternativeName>
</protein>
<organism>
    <name type="scientific">Alkalilimnicola ehrlichii (strain ATCC BAA-1101 / DSM 17681 / MLHE-1)</name>
    <dbReference type="NCBI Taxonomy" id="187272"/>
    <lineage>
        <taxon>Bacteria</taxon>
        <taxon>Pseudomonadati</taxon>
        <taxon>Pseudomonadota</taxon>
        <taxon>Gammaproteobacteria</taxon>
        <taxon>Chromatiales</taxon>
        <taxon>Ectothiorhodospiraceae</taxon>
        <taxon>Alkalilimnicola</taxon>
    </lineage>
</organism>
<evidence type="ECO:0000255" key="1">
    <source>
        <dbReference type="HAMAP-Rule" id="MF_00358"/>
    </source>
</evidence>
<evidence type="ECO:0000256" key="2">
    <source>
        <dbReference type="SAM" id="MobiDB-lite"/>
    </source>
</evidence>
<evidence type="ECO:0000305" key="3"/>
<sequence>MPIVKVRENEPFEVALRRFKRSCEKAGVLSEIRRREHYEKPTQERKRKAAAAVKRHMKRLSREQARRRRLY</sequence>
<dbReference type="EMBL" id="CP000453">
    <property type="protein sequence ID" value="ABI57859.1"/>
    <property type="molecule type" value="Genomic_DNA"/>
</dbReference>
<dbReference type="RefSeq" id="WP_011630252.1">
    <property type="nucleotide sequence ID" value="NC_008340.1"/>
</dbReference>
<dbReference type="SMR" id="Q0A5M8"/>
<dbReference type="KEGG" id="aeh:Mlg_2519"/>
<dbReference type="eggNOG" id="COG0828">
    <property type="taxonomic scope" value="Bacteria"/>
</dbReference>
<dbReference type="HOGENOM" id="CLU_159258_1_0_6"/>
<dbReference type="OrthoDB" id="9799244at2"/>
<dbReference type="Proteomes" id="UP000001962">
    <property type="component" value="Chromosome"/>
</dbReference>
<dbReference type="GO" id="GO:1990904">
    <property type="term" value="C:ribonucleoprotein complex"/>
    <property type="evidence" value="ECO:0007669"/>
    <property type="project" value="UniProtKB-KW"/>
</dbReference>
<dbReference type="GO" id="GO:0005840">
    <property type="term" value="C:ribosome"/>
    <property type="evidence" value="ECO:0007669"/>
    <property type="project" value="UniProtKB-KW"/>
</dbReference>
<dbReference type="GO" id="GO:0003735">
    <property type="term" value="F:structural constituent of ribosome"/>
    <property type="evidence" value="ECO:0007669"/>
    <property type="project" value="InterPro"/>
</dbReference>
<dbReference type="GO" id="GO:0006412">
    <property type="term" value="P:translation"/>
    <property type="evidence" value="ECO:0007669"/>
    <property type="project" value="UniProtKB-UniRule"/>
</dbReference>
<dbReference type="Gene3D" id="1.20.5.1150">
    <property type="entry name" value="Ribosomal protein S8"/>
    <property type="match status" value="1"/>
</dbReference>
<dbReference type="HAMAP" id="MF_00358">
    <property type="entry name" value="Ribosomal_bS21"/>
    <property type="match status" value="1"/>
</dbReference>
<dbReference type="InterPro" id="IPR001911">
    <property type="entry name" value="Ribosomal_bS21"/>
</dbReference>
<dbReference type="InterPro" id="IPR018278">
    <property type="entry name" value="Ribosomal_bS21_CS"/>
</dbReference>
<dbReference type="InterPro" id="IPR038380">
    <property type="entry name" value="Ribosomal_bS21_sf"/>
</dbReference>
<dbReference type="NCBIfam" id="TIGR00030">
    <property type="entry name" value="S21p"/>
    <property type="match status" value="1"/>
</dbReference>
<dbReference type="PANTHER" id="PTHR21109">
    <property type="entry name" value="MITOCHONDRIAL 28S RIBOSOMAL PROTEIN S21"/>
    <property type="match status" value="1"/>
</dbReference>
<dbReference type="PANTHER" id="PTHR21109:SF22">
    <property type="entry name" value="SMALL RIBOSOMAL SUBUNIT PROTEIN BS21"/>
    <property type="match status" value="1"/>
</dbReference>
<dbReference type="Pfam" id="PF01165">
    <property type="entry name" value="Ribosomal_S21"/>
    <property type="match status" value="1"/>
</dbReference>
<dbReference type="PRINTS" id="PR00976">
    <property type="entry name" value="RIBOSOMALS21"/>
</dbReference>
<dbReference type="PROSITE" id="PS01181">
    <property type="entry name" value="RIBOSOMAL_S21"/>
    <property type="match status" value="1"/>
</dbReference>
<proteinExistence type="inferred from homology"/>
<reference key="1">
    <citation type="submission" date="2006-08" db="EMBL/GenBank/DDBJ databases">
        <title>Complete sequence of Alkalilimnicola ehrilichei MLHE-1.</title>
        <authorList>
            <person name="Copeland A."/>
            <person name="Lucas S."/>
            <person name="Lapidus A."/>
            <person name="Barry K."/>
            <person name="Detter J.C."/>
            <person name="Glavina del Rio T."/>
            <person name="Hammon N."/>
            <person name="Israni S."/>
            <person name="Dalin E."/>
            <person name="Tice H."/>
            <person name="Pitluck S."/>
            <person name="Sims D."/>
            <person name="Brettin T."/>
            <person name="Bruce D."/>
            <person name="Han C."/>
            <person name="Tapia R."/>
            <person name="Gilna P."/>
            <person name="Schmutz J."/>
            <person name="Larimer F."/>
            <person name="Land M."/>
            <person name="Hauser L."/>
            <person name="Kyrpides N."/>
            <person name="Mikhailova N."/>
            <person name="Oremland R.S."/>
            <person name="Hoeft S.E."/>
            <person name="Switzer-Blum J."/>
            <person name="Kulp T."/>
            <person name="King G."/>
            <person name="Tabita R."/>
            <person name="Witte B."/>
            <person name="Santini J.M."/>
            <person name="Basu P."/>
            <person name="Hollibaugh J.T."/>
            <person name="Xie G."/>
            <person name="Stolz J.F."/>
            <person name="Richardson P."/>
        </authorList>
    </citation>
    <scope>NUCLEOTIDE SEQUENCE [LARGE SCALE GENOMIC DNA]</scope>
    <source>
        <strain>ATCC BAA-1101 / DSM 17681 / MLHE-1</strain>
    </source>
</reference>
<accession>Q0A5M8</accession>
<name>RS21_ALKEH</name>
<comment type="similarity">
    <text evidence="1">Belongs to the bacterial ribosomal protein bS21 family.</text>
</comment>
<feature type="chain" id="PRO_0000266620" description="Small ribosomal subunit protein bS21">
    <location>
        <begin position="1"/>
        <end position="71"/>
    </location>
</feature>
<feature type="region of interest" description="Disordered" evidence="2">
    <location>
        <begin position="37"/>
        <end position="71"/>
    </location>
</feature>
<feature type="compositionally biased region" description="Basic residues" evidence="2">
    <location>
        <begin position="45"/>
        <end position="71"/>
    </location>
</feature>